<dbReference type="GO" id="GO:0005576">
    <property type="term" value="C:extracellular region"/>
    <property type="evidence" value="ECO:0000314"/>
    <property type="project" value="UniProtKB"/>
</dbReference>
<dbReference type="GO" id="GO:0050830">
    <property type="term" value="P:defense response to Gram-positive bacterium"/>
    <property type="evidence" value="ECO:0000314"/>
    <property type="project" value="UniProtKB"/>
</dbReference>
<dbReference type="InterPro" id="IPR013157">
    <property type="entry name" value="Aurein_antimicrobial_peptide"/>
</dbReference>
<dbReference type="Pfam" id="PF08256">
    <property type="entry name" value="Antimicrobial20"/>
    <property type="match status" value="1"/>
</dbReference>
<accession>P84263</accession>
<sequence>GLFDIIKNIFSGL</sequence>
<reference evidence="2" key="1">
    <citation type="journal article" date="2001" name="Rapid Commun. Mass Spectrom.">
        <title>Bioactive dahlein peptides from the skin secretions of the Australian aquatic frog Litoria dahlii: sequence determination by electrospray mass spectrometry.</title>
        <authorList>
            <person name="Wegener K.L."/>
            <person name="Brinkworth C.S."/>
            <person name="Bowie J.H."/>
            <person name="Wallace J.C."/>
            <person name="Tyler M.J."/>
        </authorList>
    </citation>
    <scope>PROTEIN SEQUENCE</scope>
    <scope>FUNCTION</scope>
    <scope>SUBCELLULAR LOCATION</scope>
    <scope>TISSUE SPECIFICITY</scope>
    <scope>MASS SPECTROMETRY</scope>
    <source>
        <tissue evidence="1">Skin secretion</tissue>
    </source>
</reference>
<organism>
    <name type="scientific">Ranoidea dahlii</name>
    <name type="common">Dahl's aquatic frog</name>
    <name type="synonym">Litoria dahlii</name>
    <dbReference type="NCBI Taxonomy" id="299727"/>
    <lineage>
        <taxon>Eukaryota</taxon>
        <taxon>Metazoa</taxon>
        <taxon>Chordata</taxon>
        <taxon>Craniata</taxon>
        <taxon>Vertebrata</taxon>
        <taxon>Euteleostomi</taxon>
        <taxon>Amphibia</taxon>
        <taxon>Batrachia</taxon>
        <taxon>Anura</taxon>
        <taxon>Neobatrachia</taxon>
        <taxon>Hyloidea</taxon>
        <taxon>Hylidae</taxon>
        <taxon>Pelodryadinae</taxon>
        <taxon>Ranoidea</taxon>
    </lineage>
</organism>
<evidence type="ECO:0000269" key="1">
    <source>
    </source>
</evidence>
<evidence type="ECO:0000305" key="2"/>
<comment type="function">
    <text evidence="1">Weak wide spectrum antimicrobial activity against Gram-positive bacteria.</text>
</comment>
<comment type="subcellular location">
    <subcellularLocation>
        <location evidence="1">Secreted</location>
    </subcellularLocation>
</comment>
<comment type="tissue specificity">
    <text evidence="1">Expressed by the skin dorsal glands.</text>
</comment>
<comment type="mass spectrometry"/>
<name>DAH12_RANDH</name>
<feature type="peptide" id="PRO_0000043773" description="Dahlein-1.2">
    <location>
        <begin position="1"/>
        <end position="13"/>
    </location>
</feature>
<keyword id="KW-0878">Amphibian defense peptide</keyword>
<keyword id="KW-0044">Antibiotic</keyword>
<keyword id="KW-0929">Antimicrobial</keyword>
<keyword id="KW-0903">Direct protein sequencing</keyword>
<keyword id="KW-0964">Secreted</keyword>
<proteinExistence type="evidence at protein level"/>
<protein>
    <recommendedName>
        <fullName>Dahlein-1.2</fullName>
    </recommendedName>
</protein>